<protein>
    <recommendedName>
        <fullName evidence="2">Small ribosomal subunit protein uS12</fullName>
    </recommendedName>
    <alternativeName>
        <fullName evidence="4">30S ribosomal protein S12</fullName>
    </alternativeName>
</protein>
<proteinExistence type="inferred from homology"/>
<feature type="chain" id="PRO_1000049774" description="Small ribosomal subunit protein uS12">
    <location>
        <begin position="1"/>
        <end position="126"/>
    </location>
</feature>
<feature type="region of interest" description="Disordered" evidence="3">
    <location>
        <begin position="1"/>
        <end position="26"/>
    </location>
</feature>
<feature type="region of interest" description="Disordered" evidence="3">
    <location>
        <begin position="102"/>
        <end position="126"/>
    </location>
</feature>
<feature type="compositionally biased region" description="Basic residues" evidence="3">
    <location>
        <begin position="113"/>
        <end position="126"/>
    </location>
</feature>
<feature type="modified residue" description="3-methylthioaspartic acid" evidence="1">
    <location>
        <position position="89"/>
    </location>
</feature>
<accession>A1V8A8</accession>
<gene>
    <name evidence="2" type="primary">rpsL</name>
    <name type="ordered locus">BMASAVP1_A3174</name>
</gene>
<organism>
    <name type="scientific">Burkholderia mallei (strain SAVP1)</name>
    <dbReference type="NCBI Taxonomy" id="320388"/>
    <lineage>
        <taxon>Bacteria</taxon>
        <taxon>Pseudomonadati</taxon>
        <taxon>Pseudomonadota</taxon>
        <taxon>Betaproteobacteria</taxon>
        <taxon>Burkholderiales</taxon>
        <taxon>Burkholderiaceae</taxon>
        <taxon>Burkholderia</taxon>
        <taxon>pseudomallei group</taxon>
    </lineage>
</organism>
<evidence type="ECO:0000250" key="1"/>
<evidence type="ECO:0000255" key="2">
    <source>
        <dbReference type="HAMAP-Rule" id="MF_00403"/>
    </source>
</evidence>
<evidence type="ECO:0000256" key="3">
    <source>
        <dbReference type="SAM" id="MobiDB-lite"/>
    </source>
</evidence>
<evidence type="ECO:0000305" key="4"/>
<name>RS12_BURMS</name>
<sequence length="126" mass="13970">MPTINQLVRKGRASETTKSKSPALQDCPQRRGVCTRVYTTTPKKPNSALRKVAKVRLTNGFEVISYIGGEGHNLQEHSVVLIRGGRVKDLPGVRYHMVRGSLDTQGVKDRRQARSKYGAKRAKAAK</sequence>
<keyword id="KW-0488">Methylation</keyword>
<keyword id="KW-0687">Ribonucleoprotein</keyword>
<keyword id="KW-0689">Ribosomal protein</keyword>
<keyword id="KW-0694">RNA-binding</keyword>
<keyword id="KW-0699">rRNA-binding</keyword>
<keyword id="KW-0820">tRNA-binding</keyword>
<dbReference type="EMBL" id="CP000526">
    <property type="protein sequence ID" value="ABM52798.1"/>
    <property type="molecule type" value="Genomic_DNA"/>
</dbReference>
<dbReference type="RefSeq" id="WP_004198362.1">
    <property type="nucleotide sequence ID" value="NC_008785.1"/>
</dbReference>
<dbReference type="SMR" id="A1V8A8"/>
<dbReference type="GeneID" id="92980324"/>
<dbReference type="KEGG" id="bmv:BMASAVP1_A3174"/>
<dbReference type="HOGENOM" id="CLU_104295_1_2_4"/>
<dbReference type="GO" id="GO:0015935">
    <property type="term" value="C:small ribosomal subunit"/>
    <property type="evidence" value="ECO:0007669"/>
    <property type="project" value="InterPro"/>
</dbReference>
<dbReference type="GO" id="GO:0019843">
    <property type="term" value="F:rRNA binding"/>
    <property type="evidence" value="ECO:0007669"/>
    <property type="project" value="UniProtKB-UniRule"/>
</dbReference>
<dbReference type="GO" id="GO:0003735">
    <property type="term" value="F:structural constituent of ribosome"/>
    <property type="evidence" value="ECO:0007669"/>
    <property type="project" value="InterPro"/>
</dbReference>
<dbReference type="GO" id="GO:0000049">
    <property type="term" value="F:tRNA binding"/>
    <property type="evidence" value="ECO:0007669"/>
    <property type="project" value="UniProtKB-UniRule"/>
</dbReference>
<dbReference type="GO" id="GO:0006412">
    <property type="term" value="P:translation"/>
    <property type="evidence" value="ECO:0007669"/>
    <property type="project" value="UniProtKB-UniRule"/>
</dbReference>
<dbReference type="CDD" id="cd03368">
    <property type="entry name" value="Ribosomal_S12"/>
    <property type="match status" value="1"/>
</dbReference>
<dbReference type="FunFam" id="2.40.50.140:FF:000001">
    <property type="entry name" value="30S ribosomal protein S12"/>
    <property type="match status" value="1"/>
</dbReference>
<dbReference type="Gene3D" id="2.40.50.140">
    <property type="entry name" value="Nucleic acid-binding proteins"/>
    <property type="match status" value="1"/>
</dbReference>
<dbReference type="HAMAP" id="MF_00403_B">
    <property type="entry name" value="Ribosomal_uS12_B"/>
    <property type="match status" value="1"/>
</dbReference>
<dbReference type="InterPro" id="IPR012340">
    <property type="entry name" value="NA-bd_OB-fold"/>
</dbReference>
<dbReference type="InterPro" id="IPR006032">
    <property type="entry name" value="Ribosomal_uS12"/>
</dbReference>
<dbReference type="InterPro" id="IPR005679">
    <property type="entry name" value="Ribosomal_uS12_bac"/>
</dbReference>
<dbReference type="NCBIfam" id="TIGR00981">
    <property type="entry name" value="rpsL_bact"/>
    <property type="match status" value="1"/>
</dbReference>
<dbReference type="PANTHER" id="PTHR11652">
    <property type="entry name" value="30S RIBOSOMAL PROTEIN S12 FAMILY MEMBER"/>
    <property type="match status" value="1"/>
</dbReference>
<dbReference type="Pfam" id="PF00164">
    <property type="entry name" value="Ribosom_S12_S23"/>
    <property type="match status" value="1"/>
</dbReference>
<dbReference type="PIRSF" id="PIRSF002133">
    <property type="entry name" value="Ribosomal_S12/S23"/>
    <property type="match status" value="1"/>
</dbReference>
<dbReference type="PRINTS" id="PR01034">
    <property type="entry name" value="RIBOSOMALS12"/>
</dbReference>
<dbReference type="SUPFAM" id="SSF50249">
    <property type="entry name" value="Nucleic acid-binding proteins"/>
    <property type="match status" value="1"/>
</dbReference>
<dbReference type="PROSITE" id="PS00055">
    <property type="entry name" value="RIBOSOMAL_S12"/>
    <property type="match status" value="1"/>
</dbReference>
<comment type="function">
    <text evidence="2">With S4 and S5 plays an important role in translational accuracy.</text>
</comment>
<comment type="function">
    <text evidence="2">Interacts with and stabilizes bases of the 16S rRNA that are involved in tRNA selection in the A site and with the mRNA backbone. Located at the interface of the 30S and 50S subunits, it traverses the body of the 30S subunit contacting proteins on the other side and probably holding the rRNA structure together. The combined cluster of proteins S8, S12 and S17 appears to hold together the shoulder and platform of the 30S subunit.</text>
</comment>
<comment type="subunit">
    <text evidence="2">Part of the 30S ribosomal subunit. Contacts proteins S8 and S17. May interact with IF1 in the 30S initiation complex.</text>
</comment>
<comment type="similarity">
    <text evidence="2">Belongs to the universal ribosomal protein uS12 family.</text>
</comment>
<reference key="1">
    <citation type="journal article" date="2010" name="Genome Biol. Evol.">
        <title>Continuing evolution of Burkholderia mallei through genome reduction and large-scale rearrangements.</title>
        <authorList>
            <person name="Losada L."/>
            <person name="Ronning C.M."/>
            <person name="DeShazer D."/>
            <person name="Woods D."/>
            <person name="Fedorova N."/>
            <person name="Kim H.S."/>
            <person name="Shabalina S.A."/>
            <person name="Pearson T.R."/>
            <person name="Brinkac L."/>
            <person name="Tan P."/>
            <person name="Nandi T."/>
            <person name="Crabtree J."/>
            <person name="Badger J."/>
            <person name="Beckstrom-Sternberg S."/>
            <person name="Saqib M."/>
            <person name="Schutzer S.E."/>
            <person name="Keim P."/>
            <person name="Nierman W.C."/>
        </authorList>
    </citation>
    <scope>NUCLEOTIDE SEQUENCE [LARGE SCALE GENOMIC DNA]</scope>
    <source>
        <strain>SAVP1</strain>
    </source>
</reference>